<dbReference type="EC" id="3.1.-.-" evidence="1"/>
<dbReference type="EMBL" id="AE003849">
    <property type="protein sequence ID" value="AAF85026.1"/>
    <property type="molecule type" value="Genomic_DNA"/>
</dbReference>
<dbReference type="PIR" id="A82584">
    <property type="entry name" value="A82584"/>
</dbReference>
<dbReference type="SMR" id="P67496"/>
<dbReference type="STRING" id="160492.XF_2227"/>
<dbReference type="KEGG" id="xfa:XF_2227"/>
<dbReference type="eggNOG" id="COG0816">
    <property type="taxonomic scope" value="Bacteria"/>
</dbReference>
<dbReference type="HOGENOM" id="CLU_098240_3_2_6"/>
<dbReference type="Proteomes" id="UP000000812">
    <property type="component" value="Chromosome"/>
</dbReference>
<dbReference type="GO" id="GO:0005829">
    <property type="term" value="C:cytosol"/>
    <property type="evidence" value="ECO:0007669"/>
    <property type="project" value="TreeGrafter"/>
</dbReference>
<dbReference type="GO" id="GO:0004518">
    <property type="term" value="F:nuclease activity"/>
    <property type="evidence" value="ECO:0007669"/>
    <property type="project" value="UniProtKB-KW"/>
</dbReference>
<dbReference type="GO" id="GO:0000967">
    <property type="term" value="P:rRNA 5'-end processing"/>
    <property type="evidence" value="ECO:0007669"/>
    <property type="project" value="UniProtKB-UniRule"/>
</dbReference>
<dbReference type="CDD" id="cd16964">
    <property type="entry name" value="YqgF"/>
    <property type="match status" value="1"/>
</dbReference>
<dbReference type="Gene3D" id="3.30.420.140">
    <property type="entry name" value="YqgF/RNase H-like domain"/>
    <property type="match status" value="1"/>
</dbReference>
<dbReference type="HAMAP" id="MF_00651">
    <property type="entry name" value="Nuclease_YqgF"/>
    <property type="match status" value="1"/>
</dbReference>
<dbReference type="InterPro" id="IPR012337">
    <property type="entry name" value="RNaseH-like_sf"/>
</dbReference>
<dbReference type="InterPro" id="IPR005227">
    <property type="entry name" value="YqgF"/>
</dbReference>
<dbReference type="InterPro" id="IPR006641">
    <property type="entry name" value="YqgF/RNaseH-like_dom"/>
</dbReference>
<dbReference type="InterPro" id="IPR037027">
    <property type="entry name" value="YqgF/RNaseH-like_dom_sf"/>
</dbReference>
<dbReference type="NCBIfam" id="TIGR00250">
    <property type="entry name" value="RNAse_H_YqgF"/>
    <property type="match status" value="1"/>
</dbReference>
<dbReference type="PANTHER" id="PTHR33317">
    <property type="entry name" value="POLYNUCLEOTIDYL TRANSFERASE, RIBONUCLEASE H-LIKE SUPERFAMILY PROTEIN"/>
    <property type="match status" value="1"/>
</dbReference>
<dbReference type="PANTHER" id="PTHR33317:SF4">
    <property type="entry name" value="POLYNUCLEOTIDYL TRANSFERASE, RIBONUCLEASE H-LIKE SUPERFAMILY PROTEIN"/>
    <property type="match status" value="1"/>
</dbReference>
<dbReference type="Pfam" id="PF03652">
    <property type="entry name" value="RuvX"/>
    <property type="match status" value="1"/>
</dbReference>
<dbReference type="SMART" id="SM00732">
    <property type="entry name" value="YqgFc"/>
    <property type="match status" value="1"/>
</dbReference>
<dbReference type="SUPFAM" id="SSF53098">
    <property type="entry name" value="Ribonuclease H-like"/>
    <property type="match status" value="1"/>
</dbReference>
<proteinExistence type="inferred from homology"/>
<evidence type="ECO:0000255" key="1">
    <source>
        <dbReference type="HAMAP-Rule" id="MF_00651"/>
    </source>
</evidence>
<sequence length="155" mass="16590">MPEASSPFPDGIVLGFDVGTRRIGVAVGSALGAGARAVAVIDVHGVAVDWNALDRVKRNWLPVGLVVGDPLTLEGHDQPIRKQAHAFACQLRERYRLPVVLVDERSSSVEAASRFAGARAAGYKRRRDADTLDAIAAAVILERWLADPMQATSLP</sequence>
<keyword id="KW-0963">Cytoplasm</keyword>
<keyword id="KW-0378">Hydrolase</keyword>
<keyword id="KW-0540">Nuclease</keyword>
<keyword id="KW-0690">Ribosome biogenesis</keyword>
<organism>
    <name type="scientific">Xylella fastidiosa (strain 9a5c)</name>
    <dbReference type="NCBI Taxonomy" id="160492"/>
    <lineage>
        <taxon>Bacteria</taxon>
        <taxon>Pseudomonadati</taxon>
        <taxon>Pseudomonadota</taxon>
        <taxon>Gammaproteobacteria</taxon>
        <taxon>Lysobacterales</taxon>
        <taxon>Lysobacteraceae</taxon>
        <taxon>Xylella</taxon>
    </lineage>
</organism>
<comment type="function">
    <text evidence="1">Could be a nuclease involved in processing of the 5'-end of pre-16S rRNA.</text>
</comment>
<comment type="subcellular location">
    <subcellularLocation>
        <location evidence="1">Cytoplasm</location>
    </subcellularLocation>
</comment>
<comment type="similarity">
    <text evidence="1">Belongs to the YqgF nuclease family.</text>
</comment>
<accession>P67496</accession>
<accession>Q87C21</accession>
<accession>Q9PBB7</accession>
<gene>
    <name type="ordered locus">XF_2227</name>
</gene>
<name>YQGF_XYLFA</name>
<feature type="chain" id="PRO_0000172179" description="Putative pre-16S rRNA nuclease">
    <location>
        <begin position="1"/>
        <end position="155"/>
    </location>
</feature>
<protein>
    <recommendedName>
        <fullName evidence="1">Putative pre-16S rRNA nuclease</fullName>
        <ecNumber evidence="1">3.1.-.-</ecNumber>
    </recommendedName>
</protein>
<reference key="1">
    <citation type="journal article" date="2000" name="Nature">
        <title>The genome sequence of the plant pathogen Xylella fastidiosa.</title>
        <authorList>
            <person name="Simpson A.J.G."/>
            <person name="Reinach F.C."/>
            <person name="Arruda P."/>
            <person name="Abreu F.A."/>
            <person name="Acencio M."/>
            <person name="Alvarenga R."/>
            <person name="Alves L.M.C."/>
            <person name="Araya J.E."/>
            <person name="Baia G.S."/>
            <person name="Baptista C.S."/>
            <person name="Barros M.H."/>
            <person name="Bonaccorsi E.D."/>
            <person name="Bordin S."/>
            <person name="Bove J.M."/>
            <person name="Briones M.R.S."/>
            <person name="Bueno M.R.P."/>
            <person name="Camargo A.A."/>
            <person name="Camargo L.E.A."/>
            <person name="Carraro D.M."/>
            <person name="Carrer H."/>
            <person name="Colauto N.B."/>
            <person name="Colombo C."/>
            <person name="Costa F.F."/>
            <person name="Costa M.C.R."/>
            <person name="Costa-Neto C.M."/>
            <person name="Coutinho L.L."/>
            <person name="Cristofani M."/>
            <person name="Dias-Neto E."/>
            <person name="Docena C."/>
            <person name="El-Dorry H."/>
            <person name="Facincani A.P."/>
            <person name="Ferreira A.J.S."/>
            <person name="Ferreira V.C.A."/>
            <person name="Ferro J.A."/>
            <person name="Fraga J.S."/>
            <person name="Franca S.C."/>
            <person name="Franco M.C."/>
            <person name="Frohme M."/>
            <person name="Furlan L.R."/>
            <person name="Garnier M."/>
            <person name="Goldman G.H."/>
            <person name="Goldman M.H.S."/>
            <person name="Gomes S.L."/>
            <person name="Gruber A."/>
            <person name="Ho P.L."/>
            <person name="Hoheisel J.D."/>
            <person name="Junqueira M.L."/>
            <person name="Kemper E.L."/>
            <person name="Kitajima J.P."/>
            <person name="Krieger J.E."/>
            <person name="Kuramae E.E."/>
            <person name="Laigret F."/>
            <person name="Lambais M.R."/>
            <person name="Leite L.C.C."/>
            <person name="Lemos E.G.M."/>
            <person name="Lemos M.V.F."/>
            <person name="Lopes S.A."/>
            <person name="Lopes C.R."/>
            <person name="Machado J.A."/>
            <person name="Machado M.A."/>
            <person name="Madeira A.M.B.N."/>
            <person name="Madeira H.M.F."/>
            <person name="Marino C.L."/>
            <person name="Marques M.V."/>
            <person name="Martins E.A.L."/>
            <person name="Martins E.M.F."/>
            <person name="Matsukuma A.Y."/>
            <person name="Menck C.F.M."/>
            <person name="Miracca E.C."/>
            <person name="Miyaki C.Y."/>
            <person name="Monteiro-Vitorello C.B."/>
            <person name="Moon D.H."/>
            <person name="Nagai M.A."/>
            <person name="Nascimento A.L.T.O."/>
            <person name="Netto L.E.S."/>
            <person name="Nhani A. Jr."/>
            <person name="Nobrega F.G."/>
            <person name="Nunes L.R."/>
            <person name="Oliveira M.A."/>
            <person name="de Oliveira M.C."/>
            <person name="de Oliveira R.C."/>
            <person name="Palmieri D.A."/>
            <person name="Paris A."/>
            <person name="Peixoto B.R."/>
            <person name="Pereira G.A.G."/>
            <person name="Pereira H.A. Jr."/>
            <person name="Pesquero J.B."/>
            <person name="Quaggio R.B."/>
            <person name="Roberto P.G."/>
            <person name="Rodrigues V."/>
            <person name="de Rosa A.J.M."/>
            <person name="de Rosa V.E. Jr."/>
            <person name="de Sa R.G."/>
            <person name="Santelli R.V."/>
            <person name="Sawasaki H.E."/>
            <person name="da Silva A.C.R."/>
            <person name="da Silva A.M."/>
            <person name="da Silva F.R."/>
            <person name="Silva W.A. Jr."/>
            <person name="da Silveira J.F."/>
            <person name="Silvestri M.L.Z."/>
            <person name="Siqueira W.J."/>
            <person name="de Souza A.A."/>
            <person name="de Souza A.P."/>
            <person name="Terenzi M.F."/>
            <person name="Truffi D."/>
            <person name="Tsai S.M."/>
            <person name="Tsuhako M.H."/>
            <person name="Vallada H."/>
            <person name="Van Sluys M.A."/>
            <person name="Verjovski-Almeida S."/>
            <person name="Vettore A.L."/>
            <person name="Zago M.A."/>
            <person name="Zatz M."/>
            <person name="Meidanis J."/>
            <person name="Setubal J.C."/>
        </authorList>
    </citation>
    <scope>NUCLEOTIDE SEQUENCE [LARGE SCALE GENOMIC DNA]</scope>
    <source>
        <strain>9a5c</strain>
    </source>
</reference>